<dbReference type="EMBL" id="BX950851">
    <property type="protein sequence ID" value="CAG76910.1"/>
    <property type="molecule type" value="Genomic_DNA"/>
</dbReference>
<dbReference type="RefSeq" id="WP_004846568.1">
    <property type="nucleotide sequence ID" value="NC_004547.2"/>
</dbReference>
<dbReference type="SMR" id="Q6CZY8"/>
<dbReference type="STRING" id="218491.ECA4013"/>
<dbReference type="GeneID" id="97766150"/>
<dbReference type="KEGG" id="eca:ECA4013"/>
<dbReference type="eggNOG" id="COG1841">
    <property type="taxonomic scope" value="Bacteria"/>
</dbReference>
<dbReference type="HOGENOM" id="CLU_131047_1_4_6"/>
<dbReference type="OrthoDB" id="9812790at2"/>
<dbReference type="Proteomes" id="UP000007966">
    <property type="component" value="Chromosome"/>
</dbReference>
<dbReference type="GO" id="GO:0022625">
    <property type="term" value="C:cytosolic large ribosomal subunit"/>
    <property type="evidence" value="ECO:0007669"/>
    <property type="project" value="TreeGrafter"/>
</dbReference>
<dbReference type="GO" id="GO:0003735">
    <property type="term" value="F:structural constituent of ribosome"/>
    <property type="evidence" value="ECO:0007669"/>
    <property type="project" value="InterPro"/>
</dbReference>
<dbReference type="GO" id="GO:0006412">
    <property type="term" value="P:translation"/>
    <property type="evidence" value="ECO:0007669"/>
    <property type="project" value="UniProtKB-UniRule"/>
</dbReference>
<dbReference type="CDD" id="cd01658">
    <property type="entry name" value="Ribosomal_L30"/>
    <property type="match status" value="1"/>
</dbReference>
<dbReference type="FunFam" id="3.30.1390.20:FF:000001">
    <property type="entry name" value="50S ribosomal protein L30"/>
    <property type="match status" value="1"/>
</dbReference>
<dbReference type="Gene3D" id="3.30.1390.20">
    <property type="entry name" value="Ribosomal protein L30, ferredoxin-like fold domain"/>
    <property type="match status" value="1"/>
</dbReference>
<dbReference type="HAMAP" id="MF_01371_B">
    <property type="entry name" value="Ribosomal_uL30_B"/>
    <property type="match status" value="1"/>
</dbReference>
<dbReference type="InterPro" id="IPR036919">
    <property type="entry name" value="Ribo_uL30_ferredoxin-like_sf"/>
</dbReference>
<dbReference type="InterPro" id="IPR005996">
    <property type="entry name" value="Ribosomal_uL30_bac-type"/>
</dbReference>
<dbReference type="InterPro" id="IPR018038">
    <property type="entry name" value="Ribosomal_uL30_CS"/>
</dbReference>
<dbReference type="InterPro" id="IPR016082">
    <property type="entry name" value="Ribosomal_uL30_ferredoxin-like"/>
</dbReference>
<dbReference type="NCBIfam" id="TIGR01308">
    <property type="entry name" value="rpmD_bact"/>
    <property type="match status" value="1"/>
</dbReference>
<dbReference type="PANTHER" id="PTHR15892:SF2">
    <property type="entry name" value="LARGE RIBOSOMAL SUBUNIT PROTEIN UL30M"/>
    <property type="match status" value="1"/>
</dbReference>
<dbReference type="PANTHER" id="PTHR15892">
    <property type="entry name" value="MITOCHONDRIAL RIBOSOMAL PROTEIN L30"/>
    <property type="match status" value="1"/>
</dbReference>
<dbReference type="Pfam" id="PF00327">
    <property type="entry name" value="Ribosomal_L30"/>
    <property type="match status" value="1"/>
</dbReference>
<dbReference type="PIRSF" id="PIRSF002211">
    <property type="entry name" value="Ribosomal_L30_bac-type"/>
    <property type="match status" value="1"/>
</dbReference>
<dbReference type="SUPFAM" id="SSF55129">
    <property type="entry name" value="Ribosomal protein L30p/L7e"/>
    <property type="match status" value="1"/>
</dbReference>
<dbReference type="PROSITE" id="PS00634">
    <property type="entry name" value="RIBOSOMAL_L30"/>
    <property type="match status" value="1"/>
</dbReference>
<protein>
    <recommendedName>
        <fullName evidence="1">Large ribosomal subunit protein uL30</fullName>
    </recommendedName>
    <alternativeName>
        <fullName evidence="2">50S ribosomal protein L30</fullName>
    </alternativeName>
</protein>
<sequence>MAKTIKITQTRSAIGRLPKHKATLLGLGLRRIGHTVEREDTPAVRGMVNAVSYMVKVEE</sequence>
<reference key="1">
    <citation type="journal article" date="2004" name="Proc. Natl. Acad. Sci. U.S.A.">
        <title>Genome sequence of the enterobacterial phytopathogen Erwinia carotovora subsp. atroseptica and characterization of virulence factors.</title>
        <authorList>
            <person name="Bell K.S."/>
            <person name="Sebaihia M."/>
            <person name="Pritchard L."/>
            <person name="Holden M.T.G."/>
            <person name="Hyman L.J."/>
            <person name="Holeva M.C."/>
            <person name="Thomson N.R."/>
            <person name="Bentley S.D."/>
            <person name="Churcher L.J.C."/>
            <person name="Mungall K."/>
            <person name="Atkin R."/>
            <person name="Bason N."/>
            <person name="Brooks K."/>
            <person name="Chillingworth T."/>
            <person name="Clark K."/>
            <person name="Doggett J."/>
            <person name="Fraser A."/>
            <person name="Hance Z."/>
            <person name="Hauser H."/>
            <person name="Jagels K."/>
            <person name="Moule S."/>
            <person name="Norbertczak H."/>
            <person name="Ormond D."/>
            <person name="Price C."/>
            <person name="Quail M.A."/>
            <person name="Sanders M."/>
            <person name="Walker D."/>
            <person name="Whitehead S."/>
            <person name="Salmond G.P.C."/>
            <person name="Birch P.R.J."/>
            <person name="Parkhill J."/>
            <person name="Toth I.K."/>
        </authorList>
    </citation>
    <scope>NUCLEOTIDE SEQUENCE [LARGE SCALE GENOMIC DNA]</scope>
    <source>
        <strain>SCRI 1043 / ATCC BAA-672</strain>
    </source>
</reference>
<comment type="subunit">
    <text evidence="1">Part of the 50S ribosomal subunit.</text>
</comment>
<comment type="similarity">
    <text evidence="1">Belongs to the universal ribosomal protein uL30 family.</text>
</comment>
<gene>
    <name evidence="1" type="primary">rpmD</name>
    <name type="ordered locus">ECA4013</name>
</gene>
<keyword id="KW-1185">Reference proteome</keyword>
<keyword id="KW-0687">Ribonucleoprotein</keyword>
<keyword id="KW-0689">Ribosomal protein</keyword>
<accession>Q6CZY8</accession>
<organism>
    <name type="scientific">Pectobacterium atrosepticum (strain SCRI 1043 / ATCC BAA-672)</name>
    <name type="common">Erwinia carotovora subsp. atroseptica</name>
    <dbReference type="NCBI Taxonomy" id="218491"/>
    <lineage>
        <taxon>Bacteria</taxon>
        <taxon>Pseudomonadati</taxon>
        <taxon>Pseudomonadota</taxon>
        <taxon>Gammaproteobacteria</taxon>
        <taxon>Enterobacterales</taxon>
        <taxon>Pectobacteriaceae</taxon>
        <taxon>Pectobacterium</taxon>
    </lineage>
</organism>
<proteinExistence type="inferred from homology"/>
<evidence type="ECO:0000255" key="1">
    <source>
        <dbReference type="HAMAP-Rule" id="MF_01371"/>
    </source>
</evidence>
<evidence type="ECO:0000305" key="2"/>
<feature type="chain" id="PRO_0000273783" description="Large ribosomal subunit protein uL30">
    <location>
        <begin position="1"/>
        <end position="59"/>
    </location>
</feature>
<name>RL30_PECAS</name>